<accession>P51085</accession>
<name>CHS3_TRISU</name>
<dbReference type="EC" id="2.3.1.74"/>
<dbReference type="EMBL" id="L24515">
    <property type="protein sequence ID" value="AAA73937.1"/>
    <property type="molecule type" value="Genomic_DNA"/>
</dbReference>
<dbReference type="SMR" id="P51085"/>
<dbReference type="UniPathway" id="UPA00154"/>
<dbReference type="GO" id="GO:0016210">
    <property type="term" value="F:naringenin-chalcone synthase activity"/>
    <property type="evidence" value="ECO:0007669"/>
    <property type="project" value="UniProtKB-EC"/>
</dbReference>
<dbReference type="GO" id="GO:0009813">
    <property type="term" value="P:flavonoid biosynthetic process"/>
    <property type="evidence" value="ECO:0007669"/>
    <property type="project" value="UniProtKB-UniPathway"/>
</dbReference>
<dbReference type="GO" id="GO:0030639">
    <property type="term" value="P:polyketide biosynthetic process"/>
    <property type="evidence" value="ECO:0007669"/>
    <property type="project" value="TreeGrafter"/>
</dbReference>
<dbReference type="CDD" id="cd00831">
    <property type="entry name" value="CHS_like"/>
    <property type="match status" value="1"/>
</dbReference>
<dbReference type="FunFam" id="3.40.47.10:FF:000014">
    <property type="entry name" value="Chalcone synthase 1"/>
    <property type="match status" value="1"/>
</dbReference>
<dbReference type="FunFam" id="3.40.47.10:FF:000025">
    <property type="entry name" value="Chalcone synthase 2"/>
    <property type="match status" value="1"/>
</dbReference>
<dbReference type="Gene3D" id="3.40.47.10">
    <property type="match status" value="2"/>
</dbReference>
<dbReference type="InterPro" id="IPR012328">
    <property type="entry name" value="Chalcone/stilbene_synt_C"/>
</dbReference>
<dbReference type="InterPro" id="IPR001099">
    <property type="entry name" value="Chalcone/stilbene_synt_N"/>
</dbReference>
<dbReference type="InterPro" id="IPR018088">
    <property type="entry name" value="Chalcone/stilbene_synthase_AS"/>
</dbReference>
<dbReference type="InterPro" id="IPR011141">
    <property type="entry name" value="Polyketide_synthase_type-III"/>
</dbReference>
<dbReference type="InterPro" id="IPR016039">
    <property type="entry name" value="Thiolase-like"/>
</dbReference>
<dbReference type="PANTHER" id="PTHR11877:SF62">
    <property type="entry name" value="CHALCONE SYNTHASE 7"/>
    <property type="match status" value="1"/>
</dbReference>
<dbReference type="PANTHER" id="PTHR11877">
    <property type="entry name" value="HYDROXYMETHYLGLUTARYL-COA SYNTHASE"/>
    <property type="match status" value="1"/>
</dbReference>
<dbReference type="Pfam" id="PF02797">
    <property type="entry name" value="Chal_sti_synt_C"/>
    <property type="match status" value="1"/>
</dbReference>
<dbReference type="Pfam" id="PF00195">
    <property type="entry name" value="Chal_sti_synt_N"/>
    <property type="match status" value="1"/>
</dbReference>
<dbReference type="PIRSF" id="PIRSF000451">
    <property type="entry name" value="PKS_III"/>
    <property type="match status" value="1"/>
</dbReference>
<dbReference type="SUPFAM" id="SSF53901">
    <property type="entry name" value="Thiolase-like"/>
    <property type="match status" value="2"/>
</dbReference>
<dbReference type="PROSITE" id="PS00441">
    <property type="entry name" value="CHALCONE_SYNTH"/>
    <property type="match status" value="1"/>
</dbReference>
<gene>
    <name type="primary">CHS3</name>
</gene>
<reference key="1">
    <citation type="journal article" date="1995" name="Plant Physiol.">
        <title>Nucleotide sequence of additional members of the gene family encoding chalcone synthase in Trifolium subterraneum.</title>
        <authorList>
            <person name="Howles P.A."/>
            <person name="Arioli T."/>
            <person name="Weinman J.J."/>
        </authorList>
    </citation>
    <scope>NUCLEOTIDE SEQUENCE [GENOMIC DNA]</scope>
    <source>
        <strain>cv. Karridale</strain>
        <tissue>Leaf</tissue>
        <tissue>Stem</tissue>
    </source>
</reference>
<protein>
    <recommendedName>
        <fullName>Chalcone synthase 3</fullName>
        <ecNumber>2.3.1.74</ecNumber>
    </recommendedName>
    <alternativeName>
        <fullName>Naringenin-chalcone synthase 3</fullName>
    </alternativeName>
</protein>
<proteinExistence type="evidence at transcript level"/>
<sequence length="389" mass="42644">MVSVSEIRQAQRAEGPATILAIGTANPANKVEQATYPDFYFKITNSEHKVELKEKFQRMCDKSMIKSRYMYLTEEILKENPSLCEYMAPSLDARQDMVVVEVPRLGKEAAVKAIKEWGQPKSKITHLIFCTTSGVDMPGADYQLTKLLGLRPYVKRYMMYQQGCFAGGTVLRLAKDLAENNKGARVLVVCSEVTAVTFRGPSDTHLDSLVGQALFGDGAAALIVGSDPVPEIEKPIFVMVWTAQTIAPDSEGAIDGHLREAGLTFHLLKDVPGIVSKNIDKALVEAFQPLGISDYNSIFWIAHPGGPAILDQVEQKLALKPEKMKATREVLSEYGNMSSACVLFILDEMRKKSTKDGLKTTGEGLDWGVLFGFGPGLTIETVVLHSVAI</sequence>
<comment type="function">
    <text>The primary product of this enzyme is 4,2',4',6'-tetrahydroxychalcone (also termed naringenin-chalcone or chalcone) which can under specific conditions spontaneously isomerize into naringenin.</text>
</comment>
<comment type="catalytic activity">
    <reaction evidence="1">
        <text>(E)-4-coumaroyl-CoA + 3 malonyl-CoA + 3 H(+) = 2',4,4',6'-tetrahydroxychalcone + 3 CO2 + 4 CoA</text>
        <dbReference type="Rhea" id="RHEA:11128"/>
        <dbReference type="ChEBI" id="CHEBI:15378"/>
        <dbReference type="ChEBI" id="CHEBI:15413"/>
        <dbReference type="ChEBI" id="CHEBI:16526"/>
        <dbReference type="ChEBI" id="CHEBI:57287"/>
        <dbReference type="ChEBI" id="CHEBI:57384"/>
        <dbReference type="ChEBI" id="CHEBI:85008"/>
        <dbReference type="EC" id="2.3.1.74"/>
    </reaction>
</comment>
<comment type="pathway">
    <text>Secondary metabolite biosynthesis; flavonoid biosynthesis.</text>
</comment>
<comment type="developmental stage">
    <text>Expressed during development.</text>
</comment>
<comment type="similarity">
    <text evidence="2">Belongs to the thiolase-like superfamily. Chalcone/stilbene synthases family.</text>
</comment>
<keyword id="KW-0012">Acyltransferase</keyword>
<keyword id="KW-0284">Flavonoid biosynthesis</keyword>
<keyword id="KW-0808">Transferase</keyword>
<organism>
    <name type="scientific">Trifolium subterraneum</name>
    <name type="common">Subterranean clover</name>
    <dbReference type="NCBI Taxonomy" id="3900"/>
    <lineage>
        <taxon>Eukaryota</taxon>
        <taxon>Viridiplantae</taxon>
        <taxon>Streptophyta</taxon>
        <taxon>Embryophyta</taxon>
        <taxon>Tracheophyta</taxon>
        <taxon>Spermatophyta</taxon>
        <taxon>Magnoliopsida</taxon>
        <taxon>eudicotyledons</taxon>
        <taxon>Gunneridae</taxon>
        <taxon>Pentapetalae</taxon>
        <taxon>rosids</taxon>
        <taxon>fabids</taxon>
        <taxon>Fabales</taxon>
        <taxon>Fabaceae</taxon>
        <taxon>Papilionoideae</taxon>
        <taxon>50 kb inversion clade</taxon>
        <taxon>NPAAA clade</taxon>
        <taxon>Hologalegina</taxon>
        <taxon>IRL clade</taxon>
        <taxon>Trifolieae</taxon>
        <taxon>Trifolium</taxon>
    </lineage>
</organism>
<evidence type="ECO:0000255" key="1">
    <source>
        <dbReference type="PROSITE-ProRule" id="PRU10023"/>
    </source>
</evidence>
<evidence type="ECO:0000305" key="2"/>
<feature type="chain" id="PRO_0000216070" description="Chalcone synthase 3">
    <location>
        <begin position="1"/>
        <end position="389"/>
    </location>
</feature>
<feature type="active site" evidence="1">
    <location>
        <position position="164"/>
    </location>
</feature>